<proteinExistence type="inferred from homology"/>
<accession>A4IJH3</accession>
<protein>
    <recommendedName>
        <fullName evidence="1">Large ribosomal subunit protein bL33A</fullName>
    </recommendedName>
    <alternativeName>
        <fullName evidence="1">50S ribosomal protein L33 1</fullName>
    </alternativeName>
</protein>
<dbReference type="EMBL" id="CP000557">
    <property type="protein sequence ID" value="ABO65477.1"/>
    <property type="molecule type" value="Genomic_DNA"/>
</dbReference>
<dbReference type="RefSeq" id="WP_011886625.1">
    <property type="nucleotide sequence ID" value="NC_009328.1"/>
</dbReference>
<dbReference type="SMR" id="A4IJH3"/>
<dbReference type="GeneID" id="87622342"/>
<dbReference type="KEGG" id="gtn:GTNG_0090"/>
<dbReference type="eggNOG" id="COG0267">
    <property type="taxonomic scope" value="Bacteria"/>
</dbReference>
<dbReference type="HOGENOM" id="CLU_190949_0_1_9"/>
<dbReference type="Proteomes" id="UP000001578">
    <property type="component" value="Chromosome"/>
</dbReference>
<dbReference type="GO" id="GO:0005737">
    <property type="term" value="C:cytoplasm"/>
    <property type="evidence" value="ECO:0007669"/>
    <property type="project" value="UniProtKB-ARBA"/>
</dbReference>
<dbReference type="GO" id="GO:1990904">
    <property type="term" value="C:ribonucleoprotein complex"/>
    <property type="evidence" value="ECO:0007669"/>
    <property type="project" value="UniProtKB-KW"/>
</dbReference>
<dbReference type="GO" id="GO:0005840">
    <property type="term" value="C:ribosome"/>
    <property type="evidence" value="ECO:0007669"/>
    <property type="project" value="UniProtKB-KW"/>
</dbReference>
<dbReference type="GO" id="GO:0003735">
    <property type="term" value="F:structural constituent of ribosome"/>
    <property type="evidence" value="ECO:0007669"/>
    <property type="project" value="InterPro"/>
</dbReference>
<dbReference type="GO" id="GO:0006412">
    <property type="term" value="P:translation"/>
    <property type="evidence" value="ECO:0007669"/>
    <property type="project" value="UniProtKB-UniRule"/>
</dbReference>
<dbReference type="Gene3D" id="2.20.28.120">
    <property type="entry name" value="Ribosomal protein L33"/>
    <property type="match status" value="1"/>
</dbReference>
<dbReference type="HAMAP" id="MF_00294">
    <property type="entry name" value="Ribosomal_bL33"/>
    <property type="match status" value="1"/>
</dbReference>
<dbReference type="InterPro" id="IPR001705">
    <property type="entry name" value="Ribosomal_bL33"/>
</dbReference>
<dbReference type="InterPro" id="IPR038584">
    <property type="entry name" value="Ribosomal_bL33_sf"/>
</dbReference>
<dbReference type="InterPro" id="IPR011332">
    <property type="entry name" value="Ribosomal_zn-bd"/>
</dbReference>
<dbReference type="NCBIfam" id="NF001764">
    <property type="entry name" value="PRK00504.1"/>
    <property type="match status" value="1"/>
</dbReference>
<dbReference type="NCBIfam" id="NF001860">
    <property type="entry name" value="PRK00595.1"/>
    <property type="match status" value="1"/>
</dbReference>
<dbReference type="NCBIfam" id="TIGR01023">
    <property type="entry name" value="rpmG_bact"/>
    <property type="match status" value="1"/>
</dbReference>
<dbReference type="Pfam" id="PF00471">
    <property type="entry name" value="Ribosomal_L33"/>
    <property type="match status" value="1"/>
</dbReference>
<dbReference type="SUPFAM" id="SSF57829">
    <property type="entry name" value="Zn-binding ribosomal proteins"/>
    <property type="match status" value="1"/>
</dbReference>
<sequence>MRQKVTLACEQCGSRNYTTTKQMGRLGERLTANKFCSVCNKHTVHRETK</sequence>
<reference key="1">
    <citation type="journal article" date="2007" name="Proc. Natl. Acad. Sci. U.S.A.">
        <title>Genome and proteome of long-chain alkane degrading Geobacillus thermodenitrificans NG80-2 isolated from a deep-subsurface oil reservoir.</title>
        <authorList>
            <person name="Feng L."/>
            <person name="Wang W."/>
            <person name="Cheng J."/>
            <person name="Ren Y."/>
            <person name="Zhao G."/>
            <person name="Gao C."/>
            <person name="Tang Y."/>
            <person name="Liu X."/>
            <person name="Han W."/>
            <person name="Peng X."/>
            <person name="Liu R."/>
            <person name="Wang L."/>
        </authorList>
    </citation>
    <scope>NUCLEOTIDE SEQUENCE [LARGE SCALE GENOMIC DNA]</scope>
    <source>
        <strain>NG80-2</strain>
    </source>
</reference>
<name>RL331_GEOTN</name>
<comment type="similarity">
    <text evidence="1">Belongs to the bacterial ribosomal protein bL33 family.</text>
</comment>
<feature type="chain" id="PRO_0000356472" description="Large ribosomal subunit protein bL33A">
    <location>
        <begin position="1"/>
        <end position="49"/>
    </location>
</feature>
<evidence type="ECO:0000255" key="1">
    <source>
        <dbReference type="HAMAP-Rule" id="MF_00294"/>
    </source>
</evidence>
<gene>
    <name evidence="1" type="primary">rpmG1</name>
    <name type="ordered locus">GTNG_0090</name>
</gene>
<keyword id="KW-0687">Ribonucleoprotein</keyword>
<keyword id="KW-0689">Ribosomal protein</keyword>
<organism>
    <name type="scientific">Geobacillus thermodenitrificans (strain NG80-2)</name>
    <dbReference type="NCBI Taxonomy" id="420246"/>
    <lineage>
        <taxon>Bacteria</taxon>
        <taxon>Bacillati</taxon>
        <taxon>Bacillota</taxon>
        <taxon>Bacilli</taxon>
        <taxon>Bacillales</taxon>
        <taxon>Anoxybacillaceae</taxon>
        <taxon>Geobacillus</taxon>
    </lineage>
</organism>